<sequence>MSRDRFRSRGGGGGGFHRRGGGGGRGGLHDFRSPPPGMGLNQNRGPMGPGPGGPKPPLPPPPPHQQQQQPPPQQPPPQQPPPHQQPPPHQPPHQQPPPPPQESKPVVPQGPGSAPGVSSAPPPAVSAPPANPPTTGAPPGPGPTPTPPPAVPSTAPGPPPPSTPSSGVSTTPPQTGGPPPPPAGGAGPGPKPGPGPGGPKGGKMPGGPKPGGGPGMGAPGGHPKPPHRGGGEPRGGRQHHAPYHQQHHQGPPPGGPGPRTEEKISDSEGFKANLSLLRRPGEKTYTQRCRLFVGNLPADITEDEFKRLFAKYGEPGEVFINKGKGFGFIKLESRALAEIAKAELDDTPMRGRQLRVRFATHAAALSVRNLSPYVSNELLEEAFSQFGPIERAVVIVDDRGRSTGKGIVEFASKPAARKAFERCSEGVFLLTTTPRPVIVEPLEQLDDEDGLPEKLAQKNPMYQKERETPPRFAQHGTFEYEYSQRWKSLDEMEKQQREQVEKNMKDAKDKLESEMEDAYHEHQANLLRQDLMRRQEELRRMEELHSQEMQKRKEMQLRQEEERRRREEEMMIRQREMEEQMRRQREESYSRMGYMDPRERDMRMGGGGTMNMGDPYGSGGQKFPPLGGGGGIGYEANPGVPPATMSGSMMGSDMRTERFGQGGAGPVGGQGPRGMGPGTPAGYGRGREEYEGPNKKPRF</sequence>
<name>SFPQ_MOUSE</name>
<comment type="function">
    <text evidence="1 7 8">DNA- and RNA binding protein, involved in several nuclear processes. Essential pre-mRNA splicing factor required early in spliceosome formation and for splicing catalytic step II, probably as a heteromer with NONO. Binds to pre-mRNA in spliceosome C complex, and specifically binds to intronic polypyrimidine tracts. Involved in regulation of signal-induced alternative splicing. During splicing of PTPRC/CD45, a phosphorylated form is sequestered by THRAP3 from the pre-mRNA in resting T-cells; T-cell activation and subsequent reduced phosphorylation is proposed to lead to release from THRAP3 allowing binding to pre-mRNA splicing regulatotry elements which represses exon inclusion. Interacts with U5 snRNA, probably by binding to a purine-rich sequence located on the 3' side of U5 snRNA stem 1b. May be involved in a pre-mRNA coupled splicing and polyadenylation process as component of a snRNP-free complex with SNRPA/U1A. The SFPQ-NONO heteromer associated with MATR3 may play a role in nuclear retention of defective RNAs. SFPQ may be involved in homologous DNA pairing; in vitro, promotes the invasion of ssDNA between a duplex DNA and produces a D-loop formation. The SFPQ-NONO heteromer may be involved in DNA unwinding by modulating the function of topoisomerase I/TOP1; in vitro, stimulates dissociation of TOP1 from DNA after cleavage and enhances its jumping between separate DNA helices. The SFPQ-NONO heteromer binds DNA. The SFPQ-NONO heteromer may be involved in DNA non-homologous end joining (NHEJ) required for double-strand break repair and V(D)J recombination and may stabilize paired DNA ends; in vitro, the complex strongly stimulates DNA end joining, binds directly to the DNA substrates and cooperates with the Ku70/G22P1-Ku80/XRCC5 (Ku) dimer to establish a functional preligation complex. SFPQ is involved in transcriptional regulation. Functions as a transcriptional activator (By similarity). Transcriptional repression is mediated by an interaction of SFPQ with SIN3A and subsequent recruitment of histone deacetylases (HDACs). The SFPQ-NONO-NR5A1 complex binds to the CYP17 promoter and regulates basal and cAMP-dependent transcriptional activity. SFPQ isoform Long binds to the DNA binding domains (DBD) of nuclear hormone receptors, like RXRA and probably THRA, and acts as a transcriptional corepressor in absence of hormone ligands. Binds the DNA sequence 5'-CTGAGTC-3' in the insulin-like growth factor response element (IGFRE) and inhibits IGF1-stimulated transcriptional activity (By similarity). Regulates the circadian clock by repressing the transcriptional activator activity of the CLOCK-BMAL1 heterodimer. Required for the transcriptional repression of circadian target genes, such as PER1, mediated by the large PER complex through histone deacetylation (PubMed:21680841, PubMed:22966205). Required for the assembly of nuclear speckles (By similarity). Plays a role in the regulation of DNA virus-mediated innate immune response by assembling into the HDP-RNP complex, a complex that serves as a platform for IRF3 phosphorylation and subsequent innate immune response activation through the cGAS-STING pathway (By similarity).</text>
</comment>
<comment type="subunit">
    <text evidence="1 5 6 7 8">Heterodimer with NONO. Monomer and component of the SFPQ-NONO complex, which is probably a heterotetramer of two 52 kDa (NONO) and two 100 kDa (SFPQ) subunits. The coiled coil domain mediates interaction with NONO, and can also mediate formation of long, linear homooligomers (in vitro). SFPQ is a component of spliceosome and U5.4/6 snRNP complexes. Interacts with SNRPA/U1A. Component of a snRNP-free complex with SNRPA/U1A. Part of complex consisting of SFPQ, NONO and MATR3. Interacts with polypyrimidine tract-binding protein 1/PTB. Part of a complex consisting of SFPQ, NONO and NR5A1. Interacts with RXRA, probably THRA, and SIN3A. Interacts with TOP1. Part of a complex consisting of SFPQ, NONO and TOP1. Interacts with SNRNP70 in apoptotic cells. Interacts with PSPC1 (PubMed:15140795). Interacts with RNF43 (By similarity). Interacts with PITX3 and NR4A2/NURR1 (PubMed:19144721). Interacts with PTK6. Interacts with THRAP3; the interaction is dependent on SFPQ phosphorylation at 'Thr-687' and inhibits binding of SFPQ to a ESS1 exonic splicing silencer element-containing RNA (By similarity). The large PER complex involved in the histone deacetylation is composed of at least HDAC1, PER2, SFPQ and SIN3A (PubMed:21680841). Interacts with PER1 and PER2 (PubMed:22966205). Part of the HDP-RNP complex composed of at least HEXIM1, PRKDC, XRCC5, XRCC6, paraspeckle proteins (SFPQ, NONO, PSPC1, RBM14, and MATR3) and NEAT1 RNA (By similarity). Interacts with PQBP1. Component of a multiprotein complex with NONO and WASL (By similarity). Interacts with ERCC6 (By similarity).</text>
</comment>
<comment type="interaction">
    <interactant intactId="EBI-6094576">
        <id>Q8VIJ6</id>
    </interactant>
    <interactant intactId="EBI-13951208">
        <id>O88609</id>
        <label>Lmx1b</label>
    </interactant>
    <organismsDiffer>false</organismsDiffer>
    <experiments>5</experiments>
</comment>
<comment type="interaction">
    <interactant intactId="EBI-6094576">
        <id>Q8VIJ6</id>
    </interactant>
    <interactant intactId="EBI-309927">
        <id>Q8R326</id>
        <label>Pspc1</label>
    </interactant>
    <organismsDiffer>false</organismsDiffer>
    <experiments>2</experiments>
</comment>
<comment type="subcellular location">
    <subcellularLocation>
        <location evidence="1">Nucleus speckle</location>
    </subcellularLocation>
    <subcellularLocation>
        <location evidence="7">Nucleus matrix</location>
    </subcellularLocation>
    <subcellularLocation>
        <location evidence="1">Cytoplasm</location>
    </subcellularLocation>
    <text evidence="1">Predominantly in nuclear matrix.</text>
</comment>
<comment type="domain">
    <text evidence="1">The coiled coil domain mediates interaction with NONO, and can also mediate formation of long, linear homooligomers (in vitro). The coiled coil domain is required for optimal DNA binding, and optimal transcription activation.</text>
</comment>
<comment type="PTM">
    <text evidence="1">Phosphorylated on multiple serine and threonine residues during apoptosis (By similarity). Phosphorylation of C-terminal tyrosines promotes its cytoplasmic localization, impaired its binding to polypyrimidine RNA and led to cell cycle arrest (By similarity). In resting T-cells is phosphorylated at Thr-679 by GSK3B which is proposed to promote association with THRAP and to prevent binding to PTPRC/CD45 pre-mRNA; T-cell activation leads to reduced phosphorylation at Thr-679.</text>
</comment>
<dbReference type="EMBL" id="AY034062">
    <property type="protein sequence ID" value="AAK60397.1"/>
    <property type="molecule type" value="mRNA"/>
</dbReference>
<dbReference type="EMBL" id="AL606985">
    <property type="status" value="NOT_ANNOTATED_CDS"/>
    <property type="molecule type" value="Genomic_DNA"/>
</dbReference>
<dbReference type="EMBL" id="BC089305">
    <property type="protein sequence ID" value="AAH89305.1"/>
    <property type="molecule type" value="mRNA"/>
</dbReference>
<dbReference type="EMBL" id="AF272847">
    <property type="protein sequence ID" value="AAG17365.1"/>
    <property type="molecule type" value="mRNA"/>
</dbReference>
<dbReference type="CCDS" id="CCDS18662.1"/>
<dbReference type="RefSeq" id="NP_076092.1">
    <property type="nucleotide sequence ID" value="NM_023603.3"/>
</dbReference>
<dbReference type="SMR" id="Q8VIJ6"/>
<dbReference type="BioGRID" id="214752">
    <property type="interactions" value="75"/>
</dbReference>
<dbReference type="CORUM" id="Q8VIJ6"/>
<dbReference type="FunCoup" id="Q8VIJ6">
    <property type="interactions" value="3842"/>
</dbReference>
<dbReference type="IntAct" id="Q8VIJ6">
    <property type="interactions" value="15"/>
</dbReference>
<dbReference type="MINT" id="Q8VIJ6"/>
<dbReference type="STRING" id="10090.ENSMUSP00000030623"/>
<dbReference type="GlyGen" id="Q8VIJ6">
    <property type="glycosylation" value="6 sites, 1 N-linked glycan (1 site), 1 O-linked glycan (2 sites)"/>
</dbReference>
<dbReference type="iPTMnet" id="Q8VIJ6"/>
<dbReference type="MetOSite" id="Q8VIJ6"/>
<dbReference type="PhosphoSitePlus" id="Q8VIJ6"/>
<dbReference type="SwissPalm" id="Q8VIJ6"/>
<dbReference type="REPRODUCTION-2DPAGE" id="Q8VIJ6"/>
<dbReference type="jPOST" id="Q8VIJ6"/>
<dbReference type="PaxDb" id="10090-ENSMUSP00000030623"/>
<dbReference type="PeptideAtlas" id="Q8VIJ6"/>
<dbReference type="ProteomicsDB" id="261178"/>
<dbReference type="Pumba" id="Q8VIJ6"/>
<dbReference type="Antibodypedia" id="4083">
    <property type="antibodies" value="327 antibodies from 36 providers"/>
</dbReference>
<dbReference type="DNASU" id="71514"/>
<dbReference type="Ensembl" id="ENSMUST00000030623.8">
    <property type="protein sequence ID" value="ENSMUSP00000030623.8"/>
    <property type="gene ID" value="ENSMUSG00000028820.15"/>
</dbReference>
<dbReference type="GeneID" id="71514"/>
<dbReference type="KEGG" id="mmu:71514"/>
<dbReference type="UCSC" id="uc008utz.2">
    <property type="organism name" value="mouse"/>
</dbReference>
<dbReference type="AGR" id="MGI:1918764"/>
<dbReference type="CTD" id="6421"/>
<dbReference type="MGI" id="MGI:1918764">
    <property type="gene designation" value="Sfpq"/>
</dbReference>
<dbReference type="VEuPathDB" id="HostDB:ENSMUSG00000028820"/>
<dbReference type="eggNOG" id="KOG0115">
    <property type="taxonomic scope" value="Eukaryota"/>
</dbReference>
<dbReference type="GeneTree" id="ENSGT00940000156221"/>
<dbReference type="HOGENOM" id="CLU_027185_1_0_1"/>
<dbReference type="InParanoid" id="Q8VIJ6"/>
<dbReference type="OMA" id="QNRGPMA"/>
<dbReference type="OrthoDB" id="10067824at2759"/>
<dbReference type="PhylomeDB" id="Q8VIJ6"/>
<dbReference type="TreeFam" id="TF315795"/>
<dbReference type="Reactome" id="R-MMU-8849468">
    <property type="pathway name" value="PTK6 Regulates Proteins Involved in RNA Processing"/>
</dbReference>
<dbReference type="BioGRID-ORCS" id="71514">
    <property type="hits" value="27 hits in 121 CRISPR screens"/>
</dbReference>
<dbReference type="CD-CODE" id="764D0258">
    <property type="entry name" value="Neuronal RNP granule"/>
</dbReference>
<dbReference type="CD-CODE" id="CE726F99">
    <property type="entry name" value="Postsynaptic density"/>
</dbReference>
<dbReference type="ChiTaRS" id="Sfpq">
    <property type="organism name" value="mouse"/>
</dbReference>
<dbReference type="PRO" id="PR:Q8VIJ6"/>
<dbReference type="Proteomes" id="UP000000589">
    <property type="component" value="Chromosome 4"/>
</dbReference>
<dbReference type="RNAct" id="Q8VIJ6">
    <property type="molecule type" value="protein"/>
</dbReference>
<dbReference type="Bgee" id="ENSMUSG00000028820">
    <property type="expression patterns" value="Expressed in embryonic post-anal tail and 273 other cell types or tissues"/>
</dbReference>
<dbReference type="GO" id="GO:0000785">
    <property type="term" value="C:chromatin"/>
    <property type="evidence" value="ECO:0007669"/>
    <property type="project" value="Ensembl"/>
</dbReference>
<dbReference type="GO" id="GO:0005737">
    <property type="term" value="C:cytoplasm"/>
    <property type="evidence" value="ECO:0007669"/>
    <property type="project" value="UniProtKB-SubCell"/>
</dbReference>
<dbReference type="GO" id="GO:0030425">
    <property type="term" value="C:dendrite"/>
    <property type="evidence" value="ECO:0007669"/>
    <property type="project" value="GOC"/>
</dbReference>
<dbReference type="GO" id="GO:0016363">
    <property type="term" value="C:nuclear matrix"/>
    <property type="evidence" value="ECO:0007669"/>
    <property type="project" value="UniProtKB-SubCell"/>
</dbReference>
<dbReference type="GO" id="GO:0016607">
    <property type="term" value="C:nuclear speck"/>
    <property type="evidence" value="ECO:0007669"/>
    <property type="project" value="UniProtKB-SubCell"/>
</dbReference>
<dbReference type="GO" id="GO:0042382">
    <property type="term" value="C:paraspeckles"/>
    <property type="evidence" value="ECO:0000314"/>
    <property type="project" value="MGI"/>
</dbReference>
<dbReference type="GO" id="GO:0090575">
    <property type="term" value="C:RNA polymerase II transcription regulator complex"/>
    <property type="evidence" value="ECO:0000314"/>
    <property type="project" value="BHF-UCL"/>
</dbReference>
<dbReference type="GO" id="GO:0003682">
    <property type="term" value="F:chromatin binding"/>
    <property type="evidence" value="ECO:0000314"/>
    <property type="project" value="BHF-UCL"/>
</dbReference>
<dbReference type="GO" id="GO:0042826">
    <property type="term" value="F:histone deacetylase binding"/>
    <property type="evidence" value="ECO:0007669"/>
    <property type="project" value="Ensembl"/>
</dbReference>
<dbReference type="GO" id="GO:0042803">
    <property type="term" value="F:protein homodimerization activity"/>
    <property type="evidence" value="ECO:0007669"/>
    <property type="project" value="Ensembl"/>
</dbReference>
<dbReference type="GO" id="GO:0003723">
    <property type="term" value="F:RNA binding"/>
    <property type="evidence" value="ECO:0007669"/>
    <property type="project" value="UniProtKB-KW"/>
</dbReference>
<dbReference type="GO" id="GO:0000976">
    <property type="term" value="F:transcription cis-regulatory region binding"/>
    <property type="evidence" value="ECO:0000314"/>
    <property type="project" value="UniProtKB"/>
</dbReference>
<dbReference type="GO" id="GO:0002218">
    <property type="term" value="P:activation of innate immune response"/>
    <property type="evidence" value="ECO:0007669"/>
    <property type="project" value="Ensembl"/>
</dbReference>
<dbReference type="GO" id="GO:0000380">
    <property type="term" value="P:alternative mRNA splicing, via spliceosome"/>
    <property type="evidence" value="ECO:0007669"/>
    <property type="project" value="Ensembl"/>
</dbReference>
<dbReference type="GO" id="GO:0006338">
    <property type="term" value="P:chromatin remodeling"/>
    <property type="evidence" value="ECO:0000315"/>
    <property type="project" value="UniProtKB"/>
</dbReference>
<dbReference type="GO" id="GO:0051276">
    <property type="term" value="P:chromosome organization"/>
    <property type="evidence" value="ECO:0000315"/>
    <property type="project" value="MGI"/>
</dbReference>
<dbReference type="GO" id="GO:0098963">
    <property type="term" value="P:dendritic transport of messenger ribonucleoprotein complex"/>
    <property type="evidence" value="ECO:0000314"/>
    <property type="project" value="SynGO"/>
</dbReference>
<dbReference type="GO" id="GO:0006974">
    <property type="term" value="P:DNA damage response"/>
    <property type="evidence" value="ECO:0000315"/>
    <property type="project" value="MGI"/>
</dbReference>
<dbReference type="GO" id="GO:0000724">
    <property type="term" value="P:double-strand break repair via homologous recombination"/>
    <property type="evidence" value="ECO:0000266"/>
    <property type="project" value="MGI"/>
</dbReference>
<dbReference type="GO" id="GO:0045087">
    <property type="term" value="P:innate immune response"/>
    <property type="evidence" value="ECO:0007669"/>
    <property type="project" value="UniProtKB-KW"/>
</dbReference>
<dbReference type="GO" id="GO:0042754">
    <property type="term" value="P:negative regulation of circadian rhythm"/>
    <property type="evidence" value="ECO:0000315"/>
    <property type="project" value="UniProtKB"/>
</dbReference>
<dbReference type="GO" id="GO:0045892">
    <property type="term" value="P:negative regulation of DNA-templated transcription"/>
    <property type="evidence" value="ECO:0000314"/>
    <property type="project" value="UniProtKB"/>
</dbReference>
<dbReference type="GO" id="GO:0000122">
    <property type="term" value="P:negative regulation of transcription by RNA polymerase II"/>
    <property type="evidence" value="ECO:0007669"/>
    <property type="project" value="Ensembl"/>
</dbReference>
<dbReference type="GO" id="GO:1902177">
    <property type="term" value="P:positive regulation of oxidative stress-induced intrinsic apoptotic signaling pathway"/>
    <property type="evidence" value="ECO:0007669"/>
    <property type="project" value="Ensembl"/>
</dbReference>
<dbReference type="GO" id="GO:0045876">
    <property type="term" value="P:positive regulation of sister chromatid cohesion"/>
    <property type="evidence" value="ECO:0000315"/>
    <property type="project" value="MGI"/>
</dbReference>
<dbReference type="GO" id="GO:0045944">
    <property type="term" value="P:positive regulation of transcription by RNA polymerase II"/>
    <property type="evidence" value="ECO:0000250"/>
    <property type="project" value="UniProtKB"/>
</dbReference>
<dbReference type="GO" id="GO:0051726">
    <property type="term" value="P:regulation of cell cycle"/>
    <property type="evidence" value="ECO:0000315"/>
    <property type="project" value="MGI"/>
</dbReference>
<dbReference type="GO" id="GO:0042752">
    <property type="term" value="P:regulation of circadian rhythm"/>
    <property type="evidence" value="ECO:0000315"/>
    <property type="project" value="UniProtKB"/>
</dbReference>
<dbReference type="GO" id="GO:0048511">
    <property type="term" value="P:rhythmic process"/>
    <property type="evidence" value="ECO:0007669"/>
    <property type="project" value="UniProtKB-KW"/>
</dbReference>
<dbReference type="CDD" id="cd12948">
    <property type="entry name" value="NOPS_PSF"/>
    <property type="match status" value="1"/>
</dbReference>
<dbReference type="CDD" id="cd12587">
    <property type="entry name" value="RRM1_PSF"/>
    <property type="match status" value="1"/>
</dbReference>
<dbReference type="CDD" id="cd12590">
    <property type="entry name" value="RRM2_PSF"/>
    <property type="match status" value="1"/>
</dbReference>
<dbReference type="FunFam" id="3.30.70.330:FF:000043">
    <property type="entry name" value="paraspeckle component 1 isoform X1"/>
    <property type="match status" value="1"/>
</dbReference>
<dbReference type="FunFam" id="3.30.70.330:FF:000126">
    <property type="entry name" value="paraspeckle component 1 isoform X1"/>
    <property type="match status" value="1"/>
</dbReference>
<dbReference type="Gene3D" id="3.30.70.330">
    <property type="match status" value="2"/>
</dbReference>
<dbReference type="Gene3D" id="6.10.250.1170">
    <property type="match status" value="1"/>
</dbReference>
<dbReference type="InterPro" id="IPR012975">
    <property type="entry name" value="NOPS"/>
</dbReference>
<dbReference type="InterPro" id="IPR012677">
    <property type="entry name" value="Nucleotide-bd_a/b_plait_sf"/>
</dbReference>
<dbReference type="InterPro" id="IPR034526">
    <property type="entry name" value="PSF_NOPS"/>
</dbReference>
<dbReference type="InterPro" id="IPR034525">
    <property type="entry name" value="PSF_RRM1"/>
</dbReference>
<dbReference type="InterPro" id="IPR035979">
    <property type="entry name" value="RBD_domain_sf"/>
</dbReference>
<dbReference type="InterPro" id="IPR000504">
    <property type="entry name" value="RRM_dom"/>
</dbReference>
<dbReference type="PANTHER" id="PTHR23189">
    <property type="entry name" value="RNA RECOGNITION MOTIF-CONTAINING"/>
    <property type="match status" value="1"/>
</dbReference>
<dbReference type="Pfam" id="PF08075">
    <property type="entry name" value="NOPS"/>
    <property type="match status" value="1"/>
</dbReference>
<dbReference type="Pfam" id="PF00076">
    <property type="entry name" value="RRM_1"/>
    <property type="match status" value="2"/>
</dbReference>
<dbReference type="SMART" id="SM00360">
    <property type="entry name" value="RRM"/>
    <property type="match status" value="2"/>
</dbReference>
<dbReference type="SUPFAM" id="SSF54928">
    <property type="entry name" value="RNA-binding domain, RBD"/>
    <property type="match status" value="1"/>
</dbReference>
<dbReference type="PROSITE" id="PS50102">
    <property type="entry name" value="RRM"/>
    <property type="match status" value="2"/>
</dbReference>
<proteinExistence type="evidence at protein level"/>
<gene>
    <name type="primary">Sfpq</name>
    <name type="synonym">Psf</name>
</gene>
<keyword id="KW-0007">Acetylation</keyword>
<keyword id="KW-0010">Activator</keyword>
<keyword id="KW-0090">Biological rhythms</keyword>
<keyword id="KW-0175">Coiled coil</keyword>
<keyword id="KW-0963">Cytoplasm</keyword>
<keyword id="KW-0903">Direct protein sequencing</keyword>
<keyword id="KW-0227">DNA damage</keyword>
<keyword id="KW-0234">DNA repair</keyword>
<keyword id="KW-0238">DNA-binding</keyword>
<keyword id="KW-0391">Immunity</keyword>
<keyword id="KW-0399">Innate immunity</keyword>
<keyword id="KW-1017">Isopeptide bond</keyword>
<keyword id="KW-0488">Methylation</keyword>
<keyword id="KW-0507">mRNA processing</keyword>
<keyword id="KW-0508">mRNA splicing</keyword>
<keyword id="KW-0539">Nucleus</keyword>
<keyword id="KW-0597">Phosphoprotein</keyword>
<keyword id="KW-1185">Reference proteome</keyword>
<keyword id="KW-0677">Repeat</keyword>
<keyword id="KW-0678">Repressor</keyword>
<keyword id="KW-0694">RNA-binding</keyword>
<keyword id="KW-0804">Transcription</keyword>
<keyword id="KW-0805">Transcription regulation</keyword>
<keyword id="KW-0832">Ubl conjugation</keyword>
<evidence type="ECO:0000250" key="1">
    <source>
        <dbReference type="UniProtKB" id="P23246"/>
    </source>
</evidence>
<evidence type="ECO:0000255" key="2"/>
<evidence type="ECO:0000255" key="3">
    <source>
        <dbReference type="PROSITE-ProRule" id="PRU00176"/>
    </source>
</evidence>
<evidence type="ECO:0000256" key="4">
    <source>
        <dbReference type="SAM" id="MobiDB-lite"/>
    </source>
</evidence>
<evidence type="ECO:0000269" key="5">
    <source>
    </source>
</evidence>
<evidence type="ECO:0000269" key="6">
    <source>
    </source>
</evidence>
<evidence type="ECO:0000269" key="7">
    <source>
    </source>
</evidence>
<evidence type="ECO:0000269" key="8">
    <source>
    </source>
</evidence>
<evidence type="ECO:0000305" key="9"/>
<evidence type="ECO:0007744" key="10">
    <source>
    </source>
</evidence>
<evidence type="ECO:0007744" key="11">
    <source>
    </source>
</evidence>
<evidence type="ECO:0007744" key="12">
    <source>
    </source>
</evidence>
<evidence type="ECO:0007744" key="13">
    <source>
    </source>
</evidence>
<reference key="1">
    <citation type="journal article" date="2001" name="Mol. Biol. Cell">
        <title>Nuclear relocalization of the pre-mRNA splicing factor PSF during apoptosis involves hyperphosphorylation, masking of antigenic epitopes, and changes in protein interactions.</title>
        <authorList>
            <person name="Shav-Tal Y."/>
            <person name="Cohen M."/>
            <person name="Lapter S."/>
            <person name="Dye B."/>
            <person name="Patton J.G."/>
            <person name="Vandekerckhove J."/>
            <person name="Zipori D."/>
        </authorList>
    </citation>
    <scope>NUCLEOTIDE SEQUENCE [MRNA]</scope>
    <source>
        <tissue>Bone marrow</tissue>
    </source>
</reference>
<reference key="2">
    <citation type="journal article" date="2009" name="PLoS Biol.">
        <title>Lineage-specific biology revealed by a finished genome assembly of the mouse.</title>
        <authorList>
            <person name="Church D.M."/>
            <person name="Goodstadt L."/>
            <person name="Hillier L.W."/>
            <person name="Zody M.C."/>
            <person name="Goldstein S."/>
            <person name="She X."/>
            <person name="Bult C.J."/>
            <person name="Agarwala R."/>
            <person name="Cherry J.L."/>
            <person name="DiCuccio M."/>
            <person name="Hlavina W."/>
            <person name="Kapustin Y."/>
            <person name="Meric P."/>
            <person name="Maglott D."/>
            <person name="Birtle Z."/>
            <person name="Marques A.C."/>
            <person name="Graves T."/>
            <person name="Zhou S."/>
            <person name="Teague B."/>
            <person name="Potamousis K."/>
            <person name="Churas C."/>
            <person name="Place M."/>
            <person name="Herschleb J."/>
            <person name="Runnheim R."/>
            <person name="Forrest D."/>
            <person name="Amos-Landgraf J."/>
            <person name="Schwartz D.C."/>
            <person name="Cheng Z."/>
            <person name="Lindblad-Toh K."/>
            <person name="Eichler E.E."/>
            <person name="Ponting C.P."/>
        </authorList>
    </citation>
    <scope>NUCLEOTIDE SEQUENCE [LARGE SCALE GENOMIC DNA]</scope>
    <source>
        <strain>C57BL/6J</strain>
    </source>
</reference>
<reference key="3">
    <citation type="journal article" date="2004" name="Genome Res.">
        <title>The status, quality, and expansion of the NIH full-length cDNA project: the Mammalian Gene Collection (MGC).</title>
        <authorList>
            <consortium name="The MGC Project Team"/>
        </authorList>
    </citation>
    <scope>NUCLEOTIDE SEQUENCE [LARGE SCALE MRNA]</scope>
    <source>
        <strain>C57BL/6J</strain>
        <tissue>Brain</tissue>
    </source>
</reference>
<reference key="4">
    <citation type="journal article" date="2000" name="Exp. Hematol.">
        <title>Enhanced proteolysis of pre-mRNA splicing factors in myeloid cells.</title>
        <authorList>
            <person name="Shav-Tal Y."/>
            <person name="Lee B."/>
            <person name="Bar-Haim S."/>
            <person name="Vandekerckhove J."/>
            <person name="Zipori D."/>
        </authorList>
    </citation>
    <scope>NUCLEOTIDE SEQUENCE [MRNA] OF 198-580</scope>
    <scope>PROTEIN SEQUENCE OF 20-30; 47-55 AND 210-238</scope>
    <source>
        <tissue>Bone marrow</tissue>
    </source>
</reference>
<reference key="5">
    <citation type="submission" date="2009-01" db="UniProtKB">
        <authorList>
            <person name="Lubec G."/>
            <person name="Sunyer B."/>
            <person name="Chen W.-Q."/>
        </authorList>
    </citation>
    <scope>PROTEIN SEQUENCE OF 291-306; 312-322; 358-368 AND 472-485</scope>
    <scope>IDENTIFICATION BY MASS SPECTROMETRY</scope>
    <source>
        <strain>OF1</strain>
        <tissue>Hippocampus</tissue>
    </source>
</reference>
<reference key="6">
    <citation type="journal article" date="2004" name="Biol. Reprod.">
        <title>Expression and functional significance of mouse paraspeckle protein 1 on spermatogenesis.</title>
        <authorList>
            <person name="Myojin R."/>
            <person name="Kuwahara S."/>
            <person name="Yasaki T."/>
            <person name="Matsunaga T."/>
            <person name="Sakurai T."/>
            <person name="Kimura M."/>
            <person name="Uesugi S."/>
            <person name="Kurihara Y."/>
        </authorList>
    </citation>
    <scope>INTERACTION WITH PSPC1</scope>
</reference>
<reference key="7">
    <citation type="journal article" date="2007" name="Proc. Natl. Acad. Sci. U.S.A.">
        <title>Large-scale phosphorylation analysis of mouse liver.</title>
        <authorList>
            <person name="Villen J."/>
            <person name="Beausoleil S.A."/>
            <person name="Gerber S.A."/>
            <person name="Gygi S.P."/>
        </authorList>
    </citation>
    <scope>PHOSPHORYLATION [LARGE SCALE ANALYSIS] AT THR-679</scope>
    <scope>IDENTIFICATION BY MASS SPECTROMETRY [LARGE SCALE ANALYSIS]</scope>
    <source>
        <tissue>Liver</tissue>
    </source>
</reference>
<reference key="8">
    <citation type="journal article" date="2009" name="Development">
        <title>Pitx3 potentiates Nurr1 in dopamine neuron terminal differentiation through release of SMRT-mediated repression.</title>
        <authorList>
            <person name="Jacobs F.M."/>
            <person name="van Erp S."/>
            <person name="van der Linden A.J."/>
            <person name="von Oerthel L."/>
            <person name="Burbach J.P."/>
            <person name="Smidt M.P."/>
        </authorList>
    </citation>
    <scope>INTERACTION WITH PITX3 AND NR4A2</scope>
</reference>
<reference key="9">
    <citation type="journal article" date="2010" name="Cell">
        <title>A tissue-specific atlas of mouse protein phosphorylation and expression.</title>
        <authorList>
            <person name="Huttlin E.L."/>
            <person name="Jedrychowski M.P."/>
            <person name="Elias J.E."/>
            <person name="Goswami T."/>
            <person name="Rad R."/>
            <person name="Beausoleil S.A."/>
            <person name="Villen J."/>
            <person name="Haas W."/>
            <person name="Sowa M.E."/>
            <person name="Gygi S.P."/>
        </authorList>
    </citation>
    <scope>PHOSPHORYLATION [LARGE SCALE ANALYSIS] AT THR-679</scope>
    <scope>IDENTIFICATION BY MASS SPECTROMETRY [LARGE SCALE ANALYSIS]</scope>
    <source>
        <tissue>Brain</tissue>
        <tissue>Brown adipose tissue</tissue>
        <tissue>Heart</tissue>
        <tissue>Kidney</tissue>
        <tissue>Liver</tissue>
        <tissue>Lung</tissue>
        <tissue>Pancreas</tissue>
        <tissue>Spleen</tissue>
        <tissue>Testis</tissue>
    </source>
</reference>
<reference key="10">
    <citation type="journal article" date="2011" name="Science">
        <title>A molecular mechanism for circadian clock negative feedback.</title>
        <authorList>
            <person name="Duong H.A."/>
            <person name="Robles M.S."/>
            <person name="Knutti D."/>
            <person name="Weitz C.J."/>
        </authorList>
    </citation>
    <scope>FUNCTION IN CIRCADIAN RHYTHMS</scope>
    <scope>IDENTIFICATION IN A LARGE PER COMPLEX</scope>
    <scope>SUBCELLULAR LOCATION</scope>
</reference>
<reference key="11">
    <citation type="journal article" date="2012" name="Mol. Cell. Biol.">
        <title>Distinct roles of DBHS family members in the circadian transcriptional feedback loop.</title>
        <authorList>
            <person name="Kowalska E."/>
            <person name="Ripperger J.A."/>
            <person name="Muheim C."/>
            <person name="Maier B."/>
            <person name="Kurihara Y."/>
            <person name="Fox A.H."/>
            <person name="Kramer A."/>
            <person name="Brown S.A."/>
        </authorList>
    </citation>
    <scope>FUNCTION</scope>
    <scope>INTERACTION WITH PER1 AND PER2</scope>
</reference>
<reference key="12">
    <citation type="journal article" date="2013" name="Mol. Cell">
        <title>SIRT5-mediated lysine desuccinylation impacts diverse metabolic pathways.</title>
        <authorList>
            <person name="Park J."/>
            <person name="Chen Y."/>
            <person name="Tishkoff D.X."/>
            <person name="Peng C."/>
            <person name="Tan M."/>
            <person name="Dai L."/>
            <person name="Xie Z."/>
            <person name="Zhang Y."/>
            <person name="Zwaans B.M."/>
            <person name="Skinner M.E."/>
            <person name="Lombard D.B."/>
            <person name="Zhao Y."/>
        </authorList>
    </citation>
    <scope>ACETYLATION [LARGE SCALE ANALYSIS] AT LYS-200</scope>
    <scope>IDENTIFICATION BY MASS SPECTROMETRY [LARGE SCALE ANALYSIS]</scope>
    <source>
        <tissue>Embryonic fibroblast</tissue>
    </source>
</reference>
<reference key="13">
    <citation type="journal article" date="2014" name="Mol. Cell. Proteomics">
        <title>Immunoaffinity enrichment and mass spectrometry analysis of protein methylation.</title>
        <authorList>
            <person name="Guo A."/>
            <person name="Gu H."/>
            <person name="Zhou J."/>
            <person name="Mulhern D."/>
            <person name="Wang Y."/>
            <person name="Lee K.A."/>
            <person name="Yang V."/>
            <person name="Aguiar M."/>
            <person name="Kornhauser J."/>
            <person name="Jia X."/>
            <person name="Ren J."/>
            <person name="Beausoleil S.A."/>
            <person name="Silva J.C."/>
            <person name="Vemulapalli V."/>
            <person name="Bedford M.T."/>
            <person name="Comb M.J."/>
        </authorList>
    </citation>
    <scope>METHYLATION [LARGE SCALE ANALYSIS] AT ARG-9; ARG-228; ARG-234; ARG-237; ARG-673 AND ARG-685</scope>
    <scope>IDENTIFICATION BY MASS SPECTROMETRY [LARGE SCALE ANALYSIS]</scope>
    <source>
        <tissue>Brain</tissue>
        <tissue>Embryo</tissue>
    </source>
</reference>
<accession>Q8VIJ6</accession>
<accession>A2A7U6</accession>
<accession>Q9ERW2</accession>
<feature type="chain" id="PRO_0000081910" description="Splicing factor, proline- and glutamine-rich">
    <location>
        <begin position="1"/>
        <end position="699"/>
    </location>
</feature>
<feature type="repeat" description="1">
    <location>
        <begin position="9"/>
        <end position="11"/>
    </location>
</feature>
<feature type="repeat" description="2">
    <location>
        <begin position="19"/>
        <end position="21"/>
    </location>
</feature>
<feature type="repeat" description="3">
    <location>
        <begin position="25"/>
        <end position="27"/>
    </location>
</feature>
<feature type="domain" description="RRM 1" evidence="3">
    <location>
        <begin position="289"/>
        <end position="361"/>
    </location>
</feature>
<feature type="domain" description="RRM 2" evidence="3">
    <location>
        <begin position="363"/>
        <end position="444"/>
    </location>
</feature>
<feature type="region of interest" description="Disordered" evidence="4">
    <location>
        <begin position="1"/>
        <end position="265"/>
    </location>
</feature>
<feature type="region of interest" description="3 X 3 AA repeats of R-G-G">
    <location>
        <begin position="9"/>
        <end position="27"/>
    </location>
</feature>
<feature type="region of interest" description="Disordered" evidence="4">
    <location>
        <begin position="571"/>
        <end position="699"/>
    </location>
</feature>
<feature type="coiled-coil region" evidence="2">
    <location>
        <begin position="489"/>
        <end position="588"/>
    </location>
</feature>
<feature type="compositionally biased region" description="Gly residues" evidence="4">
    <location>
        <begin position="9"/>
        <end position="26"/>
    </location>
</feature>
<feature type="compositionally biased region" description="Pro residues" evidence="4">
    <location>
        <begin position="48"/>
        <end position="102"/>
    </location>
</feature>
<feature type="compositionally biased region" description="Low complexity" evidence="4">
    <location>
        <begin position="105"/>
        <end position="119"/>
    </location>
</feature>
<feature type="compositionally biased region" description="Pro residues" evidence="4">
    <location>
        <begin position="120"/>
        <end position="163"/>
    </location>
</feature>
<feature type="compositionally biased region" description="Low complexity" evidence="4">
    <location>
        <begin position="164"/>
        <end position="174"/>
    </location>
</feature>
<feature type="compositionally biased region" description="Pro residues" evidence="4">
    <location>
        <begin position="175"/>
        <end position="197"/>
    </location>
</feature>
<feature type="compositionally biased region" description="Gly residues" evidence="4">
    <location>
        <begin position="198"/>
        <end position="220"/>
    </location>
</feature>
<feature type="compositionally biased region" description="Basic residues" evidence="4">
    <location>
        <begin position="236"/>
        <end position="247"/>
    </location>
</feature>
<feature type="compositionally biased region" description="Basic and acidic residues" evidence="4">
    <location>
        <begin position="571"/>
        <end position="589"/>
    </location>
</feature>
<feature type="compositionally biased region" description="Gly residues" evidence="4">
    <location>
        <begin position="604"/>
        <end position="633"/>
    </location>
</feature>
<feature type="compositionally biased region" description="Gly residues" evidence="4">
    <location>
        <begin position="660"/>
        <end position="684"/>
    </location>
</feature>
<feature type="compositionally biased region" description="Basic and acidic residues" evidence="4">
    <location>
        <begin position="685"/>
        <end position="699"/>
    </location>
</feature>
<feature type="modified residue" description="Phosphoserine; by MKNK2" evidence="1">
    <location>
        <position position="8"/>
    </location>
</feature>
<feature type="modified residue" description="Asymmetric dimethylarginine; alternate" evidence="13">
    <location>
        <position position="9"/>
    </location>
</feature>
<feature type="modified residue" description="Omega-N-methylarginine; alternate" evidence="13">
    <location>
        <position position="9"/>
    </location>
</feature>
<feature type="modified residue" description="Phosphoserine" evidence="1">
    <location>
        <position position="33"/>
    </location>
</feature>
<feature type="modified residue" description="N6-acetyllysine" evidence="12">
    <location>
        <position position="200"/>
    </location>
</feature>
<feature type="modified residue" description="Omega-N-methylarginine" evidence="13">
    <location>
        <position position="228"/>
    </location>
</feature>
<feature type="modified residue" description="Omega-N-methylarginine" evidence="13">
    <location>
        <position position="234"/>
    </location>
</feature>
<feature type="modified residue" description="Omega-N-methylarginine" evidence="13">
    <location>
        <position position="237"/>
    </location>
</feature>
<feature type="modified residue" description="Phosphoserine" evidence="1">
    <location>
        <position position="265"/>
    </location>
</feature>
<feature type="modified residue" description="Phosphoserine; by MKNK2" evidence="1">
    <location>
        <position position="275"/>
    </location>
</feature>
<feature type="modified residue" description="Phosphotyrosine; by ALK" evidence="1">
    <location>
        <position position="285"/>
    </location>
</feature>
<feature type="modified residue" description="N6,N6-dimethyllysine" evidence="1">
    <location>
        <position position="306"/>
    </location>
</feature>
<feature type="modified residue" description="N6-acetyllysine" evidence="1">
    <location>
        <position position="311"/>
    </location>
</feature>
<feature type="modified residue" description="N6-acetyllysine; alternate" evidence="1">
    <location>
        <position position="330"/>
    </location>
</feature>
<feature type="modified residue" description="Phosphothreonine" evidence="1">
    <location>
        <position position="360"/>
    </location>
</feature>
<feature type="modified residue" description="Phosphoserine" evidence="1">
    <location>
        <position position="366"/>
    </location>
</feature>
<feature type="modified residue" description="Phosphoserine" evidence="1">
    <location>
        <position position="371"/>
    </location>
</feature>
<feature type="modified residue" description="N6-acetyllysine" evidence="1">
    <location>
        <position position="413"/>
    </location>
</feature>
<feature type="modified residue" description="N6-acetyllysine" evidence="1">
    <location>
        <position position="464"/>
    </location>
</feature>
<feature type="modified residue" description="Phosphoserine" evidence="1">
    <location>
        <position position="488"/>
    </location>
</feature>
<feature type="modified residue" description="Dimethylated arginine" evidence="1">
    <location>
        <position position="563"/>
    </location>
</feature>
<feature type="modified residue" description="Phosphoserine" evidence="1">
    <location>
        <position position="618"/>
    </location>
</feature>
<feature type="modified residue" description="Omega-N-methylarginine" evidence="13">
    <location>
        <position position="673"/>
    </location>
</feature>
<feature type="modified residue" description="Phosphothreonine" evidence="10 11">
    <location>
        <position position="679"/>
    </location>
</feature>
<feature type="modified residue" description="Phosphotyrosine" evidence="1">
    <location>
        <position position="683"/>
    </location>
</feature>
<feature type="modified residue" description="Dimethylated arginine; alternate" evidence="1">
    <location>
        <position position="685"/>
    </location>
</feature>
<feature type="modified residue" description="Omega-N-methylarginine; alternate" evidence="13">
    <location>
        <position position="685"/>
    </location>
</feature>
<feature type="modified residue" description="Omega-N-methylarginine" evidence="1">
    <location>
        <position position="687"/>
    </location>
</feature>
<feature type="cross-link" description="Glycyl lysine isopeptide (Lys-Gly) (interchain with G-Cter in SUMO2)" evidence="1">
    <location>
        <position position="263"/>
    </location>
</feature>
<feature type="cross-link" description="Glycyl lysine isopeptide (Lys-Gly) (interchain with G-Cter in SUMO2)" evidence="1">
    <location>
        <position position="271"/>
    </location>
</feature>
<feature type="cross-link" description="Glycyl lysine isopeptide (Lys-Gly) (interchain with G-Cter in SUMO2); alternate" evidence="1">
    <location>
        <position position="330"/>
    </location>
</feature>
<feature type="sequence conflict" description="In Ref. 4; AA sequence." evidence="9" ref="4">
    <original>M</original>
    <variation>Q</variation>
    <location>
        <position position="47"/>
    </location>
</feature>
<feature type="sequence conflict" description="In Ref. 4; AAG17365." evidence="9" ref="4">
    <original>S</original>
    <variation>N</variation>
    <location>
        <position position="546"/>
    </location>
</feature>
<organism>
    <name type="scientific">Mus musculus</name>
    <name type="common">Mouse</name>
    <dbReference type="NCBI Taxonomy" id="10090"/>
    <lineage>
        <taxon>Eukaryota</taxon>
        <taxon>Metazoa</taxon>
        <taxon>Chordata</taxon>
        <taxon>Craniata</taxon>
        <taxon>Vertebrata</taxon>
        <taxon>Euteleostomi</taxon>
        <taxon>Mammalia</taxon>
        <taxon>Eutheria</taxon>
        <taxon>Euarchontoglires</taxon>
        <taxon>Glires</taxon>
        <taxon>Rodentia</taxon>
        <taxon>Myomorpha</taxon>
        <taxon>Muroidea</taxon>
        <taxon>Muridae</taxon>
        <taxon>Murinae</taxon>
        <taxon>Mus</taxon>
        <taxon>Mus</taxon>
    </lineage>
</organism>
<protein>
    <recommendedName>
        <fullName>Splicing factor, proline- and glutamine-rich</fullName>
    </recommendedName>
    <alternativeName>
        <fullName>DNA-binding p52/p100 complex, 100 kDa subunit</fullName>
    </alternativeName>
    <alternativeName>
        <fullName>Polypyrimidine tract-binding protein-associated-splicing factor</fullName>
        <shortName>PSF</shortName>
        <shortName>PTB-associated-splicing factor</shortName>
    </alternativeName>
</protein>